<gene>
    <name evidence="1" type="primary">TIC214</name>
    <name type="synonym">ycf1</name>
</gene>
<sequence length="308" mass="35519">MILKSFLLGNLLSLCMKIINSVVVVGFYYGFLTTFSIGPSYLFLLRAQVMEEETEKEISSTTGFITGQLMMFISIYYAPLHLALGRPHTITVLVLPHLLFHFFWNNHKHFLDYGSTTRNSMRNLSIQCVFLNNLIFQLFNHFILPSSTLARLVNIYLFRCNSKILFVTSSFVGWLIGHILFMKWVGLVLSWIRQNHSIRSNKYLVSELTNSMARIFSILLFITSVYYLGRMPSPIVTKKLKETSEMEERGESEEETDVEIETTSETKETKQEQEGSTEEDPSLCSEEQEDPDKLDETGRDPSEWKGNI</sequence>
<protein>
    <recommendedName>
        <fullName evidence="1">Putative protein TIC 214 N-terminal part</fullName>
    </recommendedName>
    <alternativeName>
        <fullName evidence="1">Translocon at the inner envelope membrane of chloroplasts 214</fullName>
        <shortName evidence="1">AtTIC214</shortName>
    </alternativeName>
</protein>
<comment type="function">
    <text evidence="1">Involved in protein precursor import into chloroplasts. May be part of an intermediate translocation complex acting as a protein-conducting channel at the inner envelope.</text>
</comment>
<comment type="subunit">
    <text evidence="1">Part of the Tic complex.</text>
</comment>
<comment type="subcellular location">
    <subcellularLocation>
        <location evidence="1">Plastid</location>
        <location evidence="1">Chloroplast inner membrane</location>
        <topology evidence="2">Multi-pass membrane protein</topology>
    </subcellularLocation>
</comment>
<comment type="similarity">
    <text evidence="4">Belongs to the TIC214 family.</text>
</comment>
<comment type="caution">
    <text evidence="4">Could be the product of a pseudogene. In P.cenocladum this protein is in two parts: a N-terminal section of 308 AA and a C-terminal section of 1535 AA.</text>
</comment>
<geneLocation type="chloroplast"/>
<dbReference type="EMBL" id="DQ887677">
    <property type="protein sequence ID" value="ABI14530.1"/>
    <property type="molecule type" value="Genomic_DNA"/>
</dbReference>
<dbReference type="RefSeq" id="YP_784532.1">
    <property type="nucleotide sequence ID" value="NC_008457.1"/>
</dbReference>
<dbReference type="SMR" id="Q06GK1"/>
<dbReference type="GeneID" id="4363681"/>
<dbReference type="GO" id="GO:0009706">
    <property type="term" value="C:chloroplast inner membrane"/>
    <property type="evidence" value="ECO:0007669"/>
    <property type="project" value="UniProtKB-SubCell"/>
</dbReference>
<dbReference type="GO" id="GO:0015031">
    <property type="term" value="P:protein transport"/>
    <property type="evidence" value="ECO:0007669"/>
    <property type="project" value="UniProtKB-KW"/>
</dbReference>
<dbReference type="InterPro" id="IPR008896">
    <property type="entry name" value="TIC214"/>
</dbReference>
<dbReference type="PANTHER" id="PTHR33163:SF40">
    <property type="entry name" value="PROTEIN TIC 214"/>
    <property type="match status" value="1"/>
</dbReference>
<dbReference type="PANTHER" id="PTHR33163">
    <property type="entry name" value="PROTEIN TIC 214-RELATED"/>
    <property type="match status" value="1"/>
</dbReference>
<dbReference type="Pfam" id="PF05758">
    <property type="entry name" value="Ycf1"/>
    <property type="match status" value="1"/>
</dbReference>
<reference key="1">
    <citation type="journal article" date="2006" name="BMC Evol. Biol.">
        <title>Complete plastid genome sequences of Drimys, Liriodendron, and Piper: implications for the phylogenetic relationships of magnoliids.</title>
        <authorList>
            <person name="Cai Z."/>
            <person name="Penaflor C."/>
            <person name="Kuehl J.V."/>
            <person name="Leebens-Mack J."/>
            <person name="Carlson J.E."/>
            <person name="dePamphilis C.W."/>
            <person name="Boore J.L."/>
            <person name="Jansen R.K."/>
        </authorList>
    </citation>
    <scope>NUCLEOTIDE SEQUENCE [LARGE SCALE GENOMIC DNA]</scope>
</reference>
<feature type="chain" id="PRO_0000262624" description="Putative protein TIC 214 N-terminal part">
    <location>
        <begin position="1"/>
        <end position="308"/>
    </location>
</feature>
<feature type="transmembrane region" description="Helical" evidence="2">
    <location>
        <begin position="18"/>
        <end position="38"/>
    </location>
</feature>
<feature type="transmembrane region" description="Helical" evidence="2">
    <location>
        <begin position="64"/>
        <end position="84"/>
    </location>
</feature>
<feature type="transmembrane region" description="Helical" evidence="2">
    <location>
        <begin position="87"/>
        <end position="107"/>
    </location>
</feature>
<feature type="transmembrane region" description="Helical" evidence="2">
    <location>
        <begin position="124"/>
        <end position="144"/>
    </location>
</feature>
<feature type="transmembrane region" description="Helical" evidence="2">
    <location>
        <begin position="172"/>
        <end position="192"/>
    </location>
</feature>
<feature type="transmembrane region" description="Helical" evidence="2">
    <location>
        <begin position="215"/>
        <end position="235"/>
    </location>
</feature>
<feature type="region of interest" description="Disordered" evidence="3">
    <location>
        <begin position="239"/>
        <end position="308"/>
    </location>
</feature>
<feature type="compositionally biased region" description="Basic and acidic residues" evidence="3">
    <location>
        <begin position="239"/>
        <end position="249"/>
    </location>
</feature>
<feature type="compositionally biased region" description="Acidic residues" evidence="3">
    <location>
        <begin position="250"/>
        <end position="262"/>
    </location>
</feature>
<feature type="compositionally biased region" description="Basic and acidic residues" evidence="3">
    <location>
        <begin position="264"/>
        <end position="273"/>
    </location>
</feature>
<feature type="compositionally biased region" description="Acidic residues" evidence="3">
    <location>
        <begin position="275"/>
        <end position="293"/>
    </location>
</feature>
<feature type="compositionally biased region" description="Basic and acidic residues" evidence="3">
    <location>
        <begin position="294"/>
        <end position="308"/>
    </location>
</feature>
<evidence type="ECO:0000250" key="1">
    <source>
        <dbReference type="UniProtKB" id="P56785"/>
    </source>
</evidence>
<evidence type="ECO:0000255" key="2"/>
<evidence type="ECO:0000256" key="3">
    <source>
        <dbReference type="SAM" id="MobiDB-lite"/>
    </source>
</evidence>
<evidence type="ECO:0000305" key="4"/>
<name>T214A_PIPCE</name>
<accession>Q06GK1</accession>
<organism>
    <name type="scientific">Piper cenocladum</name>
    <name type="common">Ant piper</name>
    <dbReference type="NCBI Taxonomy" id="398741"/>
    <lineage>
        <taxon>Eukaryota</taxon>
        <taxon>Viridiplantae</taxon>
        <taxon>Streptophyta</taxon>
        <taxon>Embryophyta</taxon>
        <taxon>Tracheophyta</taxon>
        <taxon>Spermatophyta</taxon>
        <taxon>Magnoliopsida</taxon>
        <taxon>Magnoliidae</taxon>
        <taxon>Piperales</taxon>
        <taxon>Piperaceae</taxon>
        <taxon>Piper</taxon>
    </lineage>
</organism>
<keyword id="KW-0150">Chloroplast</keyword>
<keyword id="KW-0472">Membrane</keyword>
<keyword id="KW-0934">Plastid</keyword>
<keyword id="KW-1001">Plastid inner membrane</keyword>
<keyword id="KW-0653">Protein transport</keyword>
<keyword id="KW-0812">Transmembrane</keyword>
<keyword id="KW-1133">Transmembrane helix</keyword>
<keyword id="KW-0813">Transport</keyword>
<proteinExistence type="uncertain"/>